<gene>
    <name type="primary">fnbA</name>
    <name type="ordered locus">SAR2580</name>
</gene>
<feature type="signal peptide" evidence="3">
    <location>
        <begin position="1"/>
        <end position="36"/>
    </location>
</feature>
<feature type="chain" id="PRO_0000313884" description="Fibronectin-binding protein A">
    <location>
        <begin position="37"/>
        <end position="932"/>
    </location>
</feature>
<feature type="propeptide" id="PRO_0000313885" description="Removed by sortase" evidence="4">
    <location>
        <begin position="933"/>
        <end position="965"/>
    </location>
</feature>
<feature type="repeat" description="B-1">
    <location>
        <begin position="548"/>
        <end position="577"/>
    </location>
</feature>
<feature type="repeat" description="B-2">
    <location>
        <begin position="578"/>
        <end position="607"/>
    </location>
</feature>
<feature type="repeat" description="D-1; truncated">
    <location>
        <begin position="748"/>
        <end position="770"/>
    </location>
</feature>
<feature type="repeat" description="D-2; truncated">
    <location>
        <begin position="771"/>
        <end position="785"/>
    </location>
</feature>
<feature type="repeat" description="D-3">
    <location>
        <begin position="786"/>
        <end position="824"/>
    </location>
</feature>
<feature type="repeat" description="D-4; truncated">
    <location>
        <begin position="825"/>
        <end position="839"/>
    </location>
</feature>
<feature type="repeat" description="WR 1">
    <location>
        <begin position="840"/>
        <end position="853"/>
    </location>
</feature>
<feature type="repeat" description="WR 2">
    <location>
        <begin position="854"/>
        <end position="867"/>
    </location>
</feature>
<feature type="repeat" description="WR 3">
    <location>
        <begin position="868"/>
        <end position="881"/>
    </location>
</feature>
<feature type="repeat" description="WR 4">
    <location>
        <begin position="882"/>
        <end position="895"/>
    </location>
</feature>
<feature type="region of interest" description="Ligand-binding A region">
    <location>
        <begin position="37"/>
        <end position="514"/>
    </location>
</feature>
<feature type="region of interest" description="Disordered" evidence="5">
    <location>
        <begin position="37"/>
        <end position="206"/>
    </location>
</feature>
<feature type="region of interest" description="Fibrinogen/elastin/tropoelastin-binding" evidence="1">
    <location>
        <begin position="194"/>
        <end position="514"/>
    </location>
</feature>
<feature type="region of interest" description="Fibronectin-binding" evidence="1">
    <location>
        <begin position="515"/>
        <end position="837"/>
    </location>
</feature>
<feature type="region of interest" description="2 X approximate tandem repeats">
    <location>
        <begin position="548"/>
        <end position="607"/>
    </location>
</feature>
<feature type="region of interest" description="Disordered" evidence="5">
    <location>
        <begin position="598"/>
        <end position="625"/>
    </location>
</feature>
<feature type="region of interest" description="Disordered" evidence="5">
    <location>
        <begin position="743"/>
        <end position="774"/>
    </location>
</feature>
<feature type="region of interest" description="4 X approximate tandem repeats">
    <location>
        <begin position="748"/>
        <end position="839"/>
    </location>
</feature>
<feature type="region of interest" description="Disordered" evidence="5">
    <location>
        <begin position="794"/>
        <end position="903"/>
    </location>
</feature>
<feature type="region of interest" description="4 X tandem repeats, Pro-rich (WR)">
    <location>
        <begin position="840"/>
        <end position="895"/>
    </location>
</feature>
<feature type="region of interest" description="Disordered" evidence="5">
    <location>
        <begin position="916"/>
        <end position="942"/>
    </location>
</feature>
<feature type="short sequence motif" description="YSIRK-G/S signaling motif" evidence="2">
    <location>
        <begin position="7"/>
        <end position="18"/>
    </location>
</feature>
<feature type="short sequence motif" description="LPXTG sorting signal" evidence="4">
    <location>
        <begin position="929"/>
        <end position="933"/>
    </location>
</feature>
<feature type="compositionally biased region" description="Polar residues" evidence="5">
    <location>
        <begin position="39"/>
        <end position="55"/>
    </location>
</feature>
<feature type="compositionally biased region" description="Low complexity" evidence="5">
    <location>
        <begin position="59"/>
        <end position="74"/>
    </location>
</feature>
<feature type="compositionally biased region" description="Polar residues" evidence="5">
    <location>
        <begin position="75"/>
        <end position="92"/>
    </location>
</feature>
<feature type="compositionally biased region" description="Basic and acidic residues" evidence="5">
    <location>
        <begin position="112"/>
        <end position="122"/>
    </location>
</feature>
<feature type="compositionally biased region" description="Polar residues" evidence="5">
    <location>
        <begin position="126"/>
        <end position="139"/>
    </location>
</feature>
<feature type="compositionally biased region" description="Basic and acidic residues" evidence="5">
    <location>
        <begin position="179"/>
        <end position="193"/>
    </location>
</feature>
<feature type="compositionally biased region" description="Basic and acidic residues" evidence="5">
    <location>
        <begin position="794"/>
        <end position="803"/>
    </location>
</feature>
<feature type="compositionally biased region" description="Pro residues" evidence="5">
    <location>
        <begin position="839"/>
        <end position="885"/>
    </location>
</feature>
<feature type="modified residue" description="Pentaglycyl murein peptidoglycan amidated threonine" evidence="4">
    <location>
        <position position="932"/>
    </location>
</feature>
<sequence>MKNNLRYGIRKHKLGAASVFLGTMIVIGMGQDKEAAASEQKTTTVEENGNSATDNKVSETQTTTTNVNTIDETQSYSATATEQPSNATQVTTEEAPKAVQAPQTAQPANVETVKEEVVKEEANPQVKETTQSQDNSGDQRQVDLTPKKATQNQVAETQVEVAQPRTALESKPRVTRSTDVAEAKEASDAKVETGTDVTSKVTVEDESKIEAPKGNNVQPHEGQRVVLKYKLKFQDGLKTGDYFDFTLSNNVNTHGVATTRKVPDIKNGSLVMAKGQVLDNGRIRYTFTDYIKDKVNVTANLEINLFIDPKTVQSNGQQTITSKLNGKETSGTMQITYKDGVKNQYTNVNGSIETFDKEKNKFTHVAYIKPINGNNSDSVTVTGMLTQGSNENGTQPNVKIYEYVGVENGLPQSVYANTVDSTQLKDVTNQMGDKLKVQNNGSYSLNFDKLDKTYVIHYTGDYLNGTSEVNFRTQLTGYPENRYKTYYYYNNGYTLTWDNGLVLYSNKANGDGKYGPIVDSNNFEFSEDSGNGSISGQYDAKQIIETEENQDNTPLDIDYHTAIDGEGGYVDGYIETIEETDSSAIDIDYHTAVDSEAGHVGGYTESSEESNPIDFEESTHENSKHHADVVEYEEDTNPGGGQVTTESNLVEFDEESTKGIVTGAVSDHTTVEDTKEYTTESNLIELVDELPEEHGQAQGPVEEITENNHHISHSGLGTENGHGNYGVIEEIEENSHVDIKSELGYEGGQNSGNQSFEEDTEEDKPKYEQGGNIIDIDFDSVPQIHGFNKHNEIIEEDTNKDKPNYQFGGHNSVDFEEDTLPKVSGQNEGQQTIEEDTTPPTPPTPEVPSEPGTPTPPTPEVPSEPGKPTPPTPEVPAEPGKPVPPAKEEPKKPSKPVEQGKVVTPVIEINEKVKAVAPTKQKQAKKSELPETGGEESTNKGMLFGGLFSILGLALLRRNKKNHKA</sequence>
<accession>Q6GDU5</accession>
<reference key="1">
    <citation type="journal article" date="2004" name="Proc. Natl. Acad. Sci. U.S.A.">
        <title>Complete genomes of two clinical Staphylococcus aureus strains: evidence for the rapid evolution of virulence and drug resistance.</title>
        <authorList>
            <person name="Holden M.T.G."/>
            <person name="Feil E.J."/>
            <person name="Lindsay J.A."/>
            <person name="Peacock S.J."/>
            <person name="Day N.P.J."/>
            <person name="Enright M.C."/>
            <person name="Foster T.J."/>
            <person name="Moore C.E."/>
            <person name="Hurst L."/>
            <person name="Atkin R."/>
            <person name="Barron A."/>
            <person name="Bason N."/>
            <person name="Bentley S.D."/>
            <person name="Chillingworth C."/>
            <person name="Chillingworth T."/>
            <person name="Churcher C."/>
            <person name="Clark L."/>
            <person name="Corton C."/>
            <person name="Cronin A."/>
            <person name="Doggett J."/>
            <person name="Dowd L."/>
            <person name="Feltwell T."/>
            <person name="Hance Z."/>
            <person name="Harris B."/>
            <person name="Hauser H."/>
            <person name="Holroyd S."/>
            <person name="Jagels K."/>
            <person name="James K.D."/>
            <person name="Lennard N."/>
            <person name="Line A."/>
            <person name="Mayes R."/>
            <person name="Moule S."/>
            <person name="Mungall K."/>
            <person name="Ormond D."/>
            <person name="Quail M.A."/>
            <person name="Rabbinowitsch E."/>
            <person name="Rutherford K.M."/>
            <person name="Sanders M."/>
            <person name="Sharp S."/>
            <person name="Simmonds M."/>
            <person name="Stevens K."/>
            <person name="Whitehead S."/>
            <person name="Barrell B.G."/>
            <person name="Spratt B.G."/>
            <person name="Parkhill J."/>
        </authorList>
    </citation>
    <scope>NUCLEOTIDE SEQUENCE [LARGE SCALE GENOMIC DNA]</scope>
    <source>
        <strain>MRSA252</strain>
    </source>
</reference>
<name>FNBA_STAAR</name>
<dbReference type="EMBL" id="BX571856">
    <property type="protein sequence ID" value="CAG41560.1"/>
    <property type="molecule type" value="Genomic_DNA"/>
</dbReference>
<dbReference type="RefSeq" id="WP_000794580.1">
    <property type="nucleotide sequence ID" value="NC_002952.2"/>
</dbReference>
<dbReference type="SMR" id="Q6GDU5"/>
<dbReference type="KEGG" id="sar:SAR2580"/>
<dbReference type="HOGENOM" id="CLU_009849_1_0_9"/>
<dbReference type="PRO" id="PR:Q6GDU5"/>
<dbReference type="Proteomes" id="UP000000596">
    <property type="component" value="Chromosome"/>
</dbReference>
<dbReference type="GO" id="GO:0005576">
    <property type="term" value="C:extracellular region"/>
    <property type="evidence" value="ECO:0007669"/>
    <property type="project" value="UniProtKB-KW"/>
</dbReference>
<dbReference type="GO" id="GO:0007155">
    <property type="term" value="P:cell adhesion"/>
    <property type="evidence" value="ECO:0007669"/>
    <property type="project" value="UniProtKB-KW"/>
</dbReference>
<dbReference type="Gene3D" id="2.60.40.1280">
    <property type="match status" value="1"/>
</dbReference>
<dbReference type="Gene3D" id="2.60.40.1290">
    <property type="match status" value="1"/>
</dbReference>
<dbReference type="InterPro" id="IPR011266">
    <property type="entry name" value="Adhesin_Fg-bd_dom_2"/>
</dbReference>
<dbReference type="InterPro" id="IPR008966">
    <property type="entry name" value="Adhesion_dom_sf"/>
</dbReference>
<dbReference type="InterPro" id="IPR011252">
    <property type="entry name" value="Fibrogen-bd_dom1"/>
</dbReference>
<dbReference type="InterPro" id="IPR004237">
    <property type="entry name" value="Fibron_repeat-bd"/>
</dbReference>
<dbReference type="InterPro" id="IPR019931">
    <property type="entry name" value="LPXTG_anchor"/>
</dbReference>
<dbReference type="InterPro" id="IPR041171">
    <property type="entry name" value="SDR_Ig"/>
</dbReference>
<dbReference type="InterPro" id="IPR005877">
    <property type="entry name" value="YSIRK_signal_dom"/>
</dbReference>
<dbReference type="NCBIfam" id="TIGR01167">
    <property type="entry name" value="LPXTG_anchor"/>
    <property type="match status" value="1"/>
</dbReference>
<dbReference type="NCBIfam" id="TIGR01168">
    <property type="entry name" value="YSIRK_signal"/>
    <property type="match status" value="1"/>
</dbReference>
<dbReference type="Pfam" id="PF17961">
    <property type="entry name" value="Big_8"/>
    <property type="match status" value="1"/>
</dbReference>
<dbReference type="Pfam" id="PF02986">
    <property type="entry name" value="Fn_bind"/>
    <property type="match status" value="2"/>
</dbReference>
<dbReference type="Pfam" id="PF00746">
    <property type="entry name" value="Gram_pos_anchor"/>
    <property type="match status" value="1"/>
</dbReference>
<dbReference type="Pfam" id="PF10425">
    <property type="entry name" value="SdrG_C_C"/>
    <property type="match status" value="1"/>
</dbReference>
<dbReference type="Pfam" id="PF04650">
    <property type="entry name" value="YSIRK_signal"/>
    <property type="match status" value="1"/>
</dbReference>
<dbReference type="SUPFAM" id="SSF49401">
    <property type="entry name" value="Bacterial adhesins"/>
    <property type="match status" value="2"/>
</dbReference>
<dbReference type="PROSITE" id="PS50847">
    <property type="entry name" value="GRAM_POS_ANCHORING"/>
    <property type="match status" value="1"/>
</dbReference>
<protein>
    <recommendedName>
        <fullName>Fibronectin-binding protein A</fullName>
    </recommendedName>
</protein>
<organism>
    <name type="scientific">Staphylococcus aureus (strain MRSA252)</name>
    <dbReference type="NCBI Taxonomy" id="282458"/>
    <lineage>
        <taxon>Bacteria</taxon>
        <taxon>Bacillati</taxon>
        <taxon>Bacillota</taxon>
        <taxon>Bacilli</taxon>
        <taxon>Bacillales</taxon>
        <taxon>Staphylococcaceae</taxon>
        <taxon>Staphylococcus</taxon>
    </lineage>
</organism>
<comment type="function">
    <text evidence="1">Promotes bacterial attachment to multiple substrates, such as fibronectin (Fn), fibrinogen (Fg), elastin peptides and tropoelastin. This confers to S.aureus the ability to invade endothelial cells. Promotes adherence to and aggregation of activated platelets (By similarity).</text>
</comment>
<comment type="subcellular location">
    <subcellularLocation>
        <location evidence="4">Secreted</location>
        <location evidence="4">Cell wall</location>
        <topology evidence="4">Peptidoglycan-anchor</topology>
    </subcellularLocation>
    <text evidence="2">Anchored to the cell wall by sortase A (By similarity).</text>
</comment>
<proteinExistence type="inferred from homology"/>
<evidence type="ECO:0000250" key="1"/>
<evidence type="ECO:0000250" key="2">
    <source>
        <dbReference type="UniProtKB" id="P14738"/>
    </source>
</evidence>
<evidence type="ECO:0000255" key="3"/>
<evidence type="ECO:0000255" key="4">
    <source>
        <dbReference type="PROSITE-ProRule" id="PRU00477"/>
    </source>
</evidence>
<evidence type="ECO:0000256" key="5">
    <source>
        <dbReference type="SAM" id="MobiDB-lite"/>
    </source>
</evidence>
<keyword id="KW-0130">Cell adhesion</keyword>
<keyword id="KW-0134">Cell wall</keyword>
<keyword id="KW-0572">Peptidoglycan-anchor</keyword>
<keyword id="KW-0677">Repeat</keyword>
<keyword id="KW-0964">Secreted</keyword>
<keyword id="KW-0732">Signal</keyword>
<keyword id="KW-0843">Virulence</keyword>